<accession>Q9N1E5</accession>
<accession>A0A2R9BGU9</accession>
<dbReference type="EMBL" id="AJFE02054495">
    <property type="status" value="NOT_ANNOTATED_CDS"/>
    <property type="molecule type" value="Genomic_DNA"/>
</dbReference>
<dbReference type="EMBL" id="AJFE02054496">
    <property type="status" value="NOT_ANNOTATED_CDS"/>
    <property type="molecule type" value="Genomic_DNA"/>
</dbReference>
<dbReference type="EMBL" id="AJFE02054497">
    <property type="status" value="NOT_ANNOTATED_CDS"/>
    <property type="molecule type" value="Genomic_DNA"/>
</dbReference>
<dbReference type="EMBL" id="AF199416">
    <property type="protein sequence ID" value="AAF44615.1"/>
    <property type="molecule type" value="mRNA"/>
</dbReference>
<dbReference type="RefSeq" id="XP_008967442.1">
    <property type="nucleotide sequence ID" value="XM_008969194.1"/>
</dbReference>
<dbReference type="RefSeq" id="XP_063456201.1">
    <property type="nucleotide sequence ID" value="XM_063600131.1"/>
</dbReference>
<dbReference type="RefSeq" id="XP_063456202.1">
    <property type="nucleotide sequence ID" value="XM_063600132.1"/>
</dbReference>
<dbReference type="SMR" id="Q9N1E5"/>
<dbReference type="STRING" id="9597.ENSPPAP00000028870"/>
<dbReference type="GlyCosmos" id="Q9N1E5">
    <property type="glycosylation" value="13 sites, No reported glycans"/>
</dbReference>
<dbReference type="Ensembl" id="ENSPPAT00000051718.1">
    <property type="protein sequence ID" value="ENSPPAP00000028870.1"/>
    <property type="gene ID" value="ENSPPAG00000037462.1"/>
</dbReference>
<dbReference type="GeneID" id="100980861"/>
<dbReference type="eggNOG" id="KOG4475">
    <property type="taxonomic scope" value="Eukaryota"/>
</dbReference>
<dbReference type="GeneTree" id="ENSGT01120000271890"/>
<dbReference type="Proteomes" id="UP000240080">
    <property type="component" value="Chromosome 19"/>
</dbReference>
<dbReference type="Bgee" id="ENSPPAG00000037462">
    <property type="expression patterns" value="Expressed in liver and 5 other cell types or tissues"/>
</dbReference>
<dbReference type="GO" id="GO:0005769">
    <property type="term" value="C:early endosome"/>
    <property type="evidence" value="ECO:0007669"/>
    <property type="project" value="Ensembl"/>
</dbReference>
<dbReference type="GO" id="GO:0009897">
    <property type="term" value="C:external side of plasma membrane"/>
    <property type="evidence" value="ECO:0007669"/>
    <property type="project" value="Ensembl"/>
</dbReference>
<dbReference type="GO" id="GO:0070062">
    <property type="term" value="C:extracellular exosome"/>
    <property type="evidence" value="ECO:0007669"/>
    <property type="project" value="TreeGrafter"/>
</dbReference>
<dbReference type="GO" id="GO:0032809">
    <property type="term" value="C:neuronal cell body membrane"/>
    <property type="evidence" value="ECO:0007669"/>
    <property type="project" value="Ensembl"/>
</dbReference>
<dbReference type="GO" id="GO:0055037">
    <property type="term" value="C:recycling endosome"/>
    <property type="evidence" value="ECO:0007669"/>
    <property type="project" value="Ensembl"/>
</dbReference>
<dbReference type="GO" id="GO:0030246">
    <property type="term" value="F:carbohydrate binding"/>
    <property type="evidence" value="ECO:0007669"/>
    <property type="project" value="UniProtKB-KW"/>
</dbReference>
<dbReference type="GO" id="GO:0042609">
    <property type="term" value="F:CD4 receptor binding"/>
    <property type="evidence" value="ECO:0007669"/>
    <property type="project" value="Ensembl"/>
</dbReference>
<dbReference type="GO" id="GO:0019903">
    <property type="term" value="F:protein phosphatase binding"/>
    <property type="evidence" value="ECO:0007669"/>
    <property type="project" value="Ensembl"/>
</dbReference>
<dbReference type="GO" id="GO:0033691">
    <property type="term" value="F:sialic acid binding"/>
    <property type="evidence" value="ECO:0007669"/>
    <property type="project" value="Ensembl"/>
</dbReference>
<dbReference type="GO" id="GO:0042113">
    <property type="term" value="P:B cell activation"/>
    <property type="evidence" value="ECO:0007669"/>
    <property type="project" value="Ensembl"/>
</dbReference>
<dbReference type="GO" id="GO:0007155">
    <property type="term" value="P:cell adhesion"/>
    <property type="evidence" value="ECO:0007669"/>
    <property type="project" value="UniProtKB-KW"/>
</dbReference>
<dbReference type="GO" id="GO:0050859">
    <property type="term" value="P:negative regulation of B cell receptor signaling pathway"/>
    <property type="evidence" value="ECO:0007669"/>
    <property type="project" value="Ensembl"/>
</dbReference>
<dbReference type="GO" id="GO:0050849">
    <property type="term" value="P:negative regulation of calcium-mediated signaling"/>
    <property type="evidence" value="ECO:0007669"/>
    <property type="project" value="Ensembl"/>
</dbReference>
<dbReference type="GO" id="GO:0002638">
    <property type="term" value="P:negative regulation of immunoglobulin production"/>
    <property type="evidence" value="ECO:0007669"/>
    <property type="project" value="Ensembl"/>
</dbReference>
<dbReference type="GO" id="GO:0030888">
    <property type="term" value="P:regulation of B cell proliferation"/>
    <property type="evidence" value="ECO:0007669"/>
    <property type="project" value="Ensembl"/>
</dbReference>
<dbReference type="GO" id="GO:0030100">
    <property type="term" value="P:regulation of endocytosis"/>
    <property type="evidence" value="ECO:0007669"/>
    <property type="project" value="Ensembl"/>
</dbReference>
<dbReference type="CDD" id="cd20938">
    <property type="entry name" value="IgC1_CD22_d2"/>
    <property type="match status" value="1"/>
</dbReference>
<dbReference type="CDD" id="cd20937">
    <property type="entry name" value="IgC2_CD22_d3"/>
    <property type="match status" value="1"/>
</dbReference>
<dbReference type="CDD" id="cd20929">
    <property type="entry name" value="IgV_CD22_d1"/>
    <property type="match status" value="1"/>
</dbReference>
<dbReference type="FunFam" id="2.60.40.10:FF:001199">
    <property type="entry name" value="B-cell receptor CD22"/>
    <property type="match status" value="1"/>
</dbReference>
<dbReference type="FunFam" id="2.60.40.10:FF:001605">
    <property type="entry name" value="B-cell receptor CD22"/>
    <property type="match status" value="2"/>
</dbReference>
<dbReference type="FunFam" id="2.60.40.10:FF:002011">
    <property type="entry name" value="B-cell receptor CD22"/>
    <property type="match status" value="1"/>
</dbReference>
<dbReference type="FunFam" id="2.60.40.10:FF:002030">
    <property type="entry name" value="B-cell receptor CD22"/>
    <property type="match status" value="1"/>
</dbReference>
<dbReference type="FunFam" id="2.60.40.10:FF:002336">
    <property type="entry name" value="B-cell receptor CD22"/>
    <property type="match status" value="1"/>
</dbReference>
<dbReference type="Gene3D" id="2.60.40.10">
    <property type="entry name" value="Immunoglobulins"/>
    <property type="match status" value="7"/>
</dbReference>
<dbReference type="InterPro" id="IPR013162">
    <property type="entry name" value="CD80_C2-set"/>
</dbReference>
<dbReference type="InterPro" id="IPR007110">
    <property type="entry name" value="Ig-like_dom"/>
</dbReference>
<dbReference type="InterPro" id="IPR036179">
    <property type="entry name" value="Ig-like_dom_sf"/>
</dbReference>
<dbReference type="InterPro" id="IPR013783">
    <property type="entry name" value="Ig-like_fold"/>
</dbReference>
<dbReference type="InterPro" id="IPR056386">
    <property type="entry name" value="Ig_CD22"/>
</dbReference>
<dbReference type="InterPro" id="IPR003599">
    <property type="entry name" value="Ig_sub"/>
</dbReference>
<dbReference type="InterPro" id="IPR003598">
    <property type="entry name" value="Ig_sub2"/>
</dbReference>
<dbReference type="PANTHER" id="PTHR46958">
    <property type="entry name" value="B-CELL RECEPTOR CD22"/>
    <property type="match status" value="1"/>
</dbReference>
<dbReference type="PANTHER" id="PTHR46958:SF1">
    <property type="entry name" value="B-CELL RECEPTOR CD22"/>
    <property type="match status" value="1"/>
</dbReference>
<dbReference type="Pfam" id="PF08205">
    <property type="entry name" value="C2-set_2"/>
    <property type="match status" value="1"/>
</dbReference>
<dbReference type="Pfam" id="PF13895">
    <property type="entry name" value="Ig_2"/>
    <property type="match status" value="1"/>
</dbReference>
<dbReference type="Pfam" id="PF13927">
    <property type="entry name" value="Ig_3"/>
    <property type="match status" value="3"/>
</dbReference>
<dbReference type="Pfam" id="PF24518">
    <property type="entry name" value="Ig_CD22"/>
    <property type="match status" value="1"/>
</dbReference>
<dbReference type="SMART" id="SM00409">
    <property type="entry name" value="IG"/>
    <property type="match status" value="7"/>
</dbReference>
<dbReference type="SMART" id="SM00408">
    <property type="entry name" value="IGc2"/>
    <property type="match status" value="4"/>
</dbReference>
<dbReference type="SUPFAM" id="SSF48726">
    <property type="entry name" value="Immunoglobulin"/>
    <property type="match status" value="7"/>
</dbReference>
<dbReference type="PROSITE" id="PS50835">
    <property type="entry name" value="IG_LIKE"/>
    <property type="match status" value="6"/>
</dbReference>
<protein>
    <recommendedName>
        <fullName evidence="1">B-cell receptor CD22</fullName>
    </recommendedName>
    <alternativeName>
        <fullName>Sialic acid-binding Ig-like lectin 2</fullName>
        <shortName>Siglec-2</shortName>
    </alternativeName>
    <cdAntigenName>CD22</cdAntigenName>
</protein>
<sequence>MHLLGPWLLLLVLEYLAFSDSSKWAFEHPETLYAWEGACVWIPCTYRALDRDLESFILFHNPEYNKNTSKFDGTRLYESTKDGKVPSEQKRVQFLGDKNKNCTLSIHPVHVNDSGQLGLRMESKTAKWMERIHLNVSERPFPPHIQLPPEIQESQEVTLTCLLNFSCYGYPIQLQWLLEGVPMRQAAVTSTSLTIKSVFTRSELKFSPQWSHHGKIVTCQLQDADGKFLSNDTVQLNVKHTPKLEIKVTPSDAIVREGESVTMTCEVSSSNPEYTTISWLKDGTSLKKQNTLMLNLHEVTKDQSGKYCCQVSNDVGPGRSAEVFLQVQYAPEPSTVQILHSPAVEGSQVEFLCMSLANPLPTNYTWYHNGKEMQGRTEEKVHIPKILPWHAGTYSCVAENILGTGQRGPGAELDVQYPPKKVTTVIQNPTPIREGDTVTLSCNYNSSNPSVTRYEWKPHGAWEEPSLGVLKIQNVGWGNTTIACAACNSWCSWASPVALNVQYAPRDVRVRKIKPLSEIHSGNSVSLQCDFSSSHPKEVQFFWEKNGRLLGKESRLNFDSISPEDAGSYSCWVNNSIGQTASKAWTLEVLYAPRRLRVSMSPGDQVMEGKSATLTCESDANPPVSHYTWFDWNNQSLPYHSQKLRLEPVKVQHSGAYWCQGTNSVGKGHSPLSTLTVYYSPETIGRRVAVGFGSCLAILILAICGLKLQRRWKRTQSQQGLQENSSGQSFFVRNKKVRRAPLSEGPHSLGCYNPMMEDGISYTTLRFPETNIPRTGDAETSEMQSPPPDCDDTVTYSVLHKRQMGDYENVIPDFSEDEGIHYSELIQFGVGERPQAQENVDYVILKH</sequence>
<keyword id="KW-0130">Cell adhesion</keyword>
<keyword id="KW-1003">Cell membrane</keyword>
<keyword id="KW-1015">Disulfide bond</keyword>
<keyword id="KW-0325">Glycoprotein</keyword>
<keyword id="KW-0393">Immunoglobulin domain</keyword>
<keyword id="KW-1017">Isopeptide bond</keyword>
<keyword id="KW-0430">Lectin</keyword>
<keyword id="KW-0472">Membrane</keyword>
<keyword id="KW-0597">Phosphoprotein</keyword>
<keyword id="KW-1185">Reference proteome</keyword>
<keyword id="KW-0677">Repeat</keyword>
<keyword id="KW-0732">Signal</keyword>
<keyword id="KW-0812">Transmembrane</keyword>
<keyword id="KW-1133">Transmembrane helix</keyword>
<gene>
    <name evidence="1" type="primary">CD22</name>
    <name type="synonym">SIGLEC2</name>
</gene>
<organism>
    <name type="scientific">Pan paniscus</name>
    <name type="common">Pygmy chimpanzee</name>
    <name type="synonym">Bonobo</name>
    <dbReference type="NCBI Taxonomy" id="9597"/>
    <lineage>
        <taxon>Eukaryota</taxon>
        <taxon>Metazoa</taxon>
        <taxon>Chordata</taxon>
        <taxon>Craniata</taxon>
        <taxon>Vertebrata</taxon>
        <taxon>Euteleostomi</taxon>
        <taxon>Mammalia</taxon>
        <taxon>Eutheria</taxon>
        <taxon>Euarchontoglires</taxon>
        <taxon>Primates</taxon>
        <taxon>Haplorrhini</taxon>
        <taxon>Catarrhini</taxon>
        <taxon>Hominidae</taxon>
        <taxon>Pan</taxon>
    </lineage>
</organism>
<proteinExistence type="evidence at transcript level"/>
<feature type="signal peptide" evidence="3">
    <location>
        <begin position="1"/>
        <end position="19"/>
    </location>
</feature>
<feature type="chain" id="PRO_0000014875" description="B-cell receptor CD22" evidence="3">
    <location>
        <begin position="20"/>
        <end position="847"/>
    </location>
</feature>
<feature type="topological domain" description="Extracellular" evidence="5">
    <location>
        <begin position="20"/>
        <end position="687"/>
    </location>
</feature>
<feature type="transmembrane region" description="Helical" evidence="3">
    <location>
        <begin position="688"/>
        <end position="708"/>
    </location>
</feature>
<feature type="topological domain" description="Cytoplasmic" evidence="5">
    <location>
        <begin position="709"/>
        <end position="847"/>
    </location>
</feature>
<feature type="domain" description="Ig-like V-type" evidence="1">
    <location>
        <begin position="20"/>
        <end position="138"/>
    </location>
</feature>
<feature type="domain" description="Ig-like C2-type 1" evidence="4">
    <location>
        <begin position="143"/>
        <end position="235"/>
    </location>
</feature>
<feature type="domain" description="Ig-like C2-type 2" evidence="4">
    <location>
        <begin position="242"/>
        <end position="326"/>
    </location>
</feature>
<feature type="domain" description="Ig-like C2-type 3" evidence="4">
    <location>
        <begin position="331"/>
        <end position="416"/>
    </location>
</feature>
<feature type="domain" description="Ig-like C2-type 4" evidence="4">
    <location>
        <begin position="419"/>
        <end position="500"/>
    </location>
</feature>
<feature type="domain" description="Ig-like C2-type 5" evidence="4">
    <location>
        <begin position="505"/>
        <end position="582"/>
    </location>
</feature>
<feature type="domain" description="Ig-like C2-type 6" evidence="4">
    <location>
        <begin position="593"/>
        <end position="676"/>
    </location>
</feature>
<feature type="short sequence motif" description="ITIM motif 1" evidence="1">
    <location>
        <begin position="760"/>
        <end position="765"/>
    </location>
</feature>
<feature type="short sequence motif" description="ITIM motif 2" evidence="1">
    <location>
        <begin position="794"/>
        <end position="799"/>
    </location>
</feature>
<feature type="short sequence motif" description="ITIM motif 3" evidence="1">
    <location>
        <begin position="820"/>
        <end position="825"/>
    </location>
</feature>
<feature type="short sequence motif" description="ITIM motif 4" evidence="1">
    <location>
        <begin position="840"/>
        <end position="845"/>
    </location>
</feature>
<feature type="binding site" evidence="1">
    <location>
        <position position="120"/>
    </location>
    <ligand>
        <name>N-acetylneuraminate</name>
        <dbReference type="ChEBI" id="CHEBI:35418"/>
    </ligand>
</feature>
<feature type="modified residue" description="Phosphoserine" evidence="2">
    <location>
        <position position="725"/>
    </location>
</feature>
<feature type="modified residue" description="Phosphoserine" evidence="2">
    <location>
        <position position="726"/>
    </location>
</feature>
<feature type="modified residue" description="Phosphoserine" evidence="2">
    <location>
        <position position="729"/>
    </location>
</feature>
<feature type="modified residue" description="Phosphotyrosine" evidence="2">
    <location>
        <position position="762"/>
    </location>
</feature>
<feature type="modified residue" description="Phosphotyrosine" evidence="2">
    <location>
        <position position="807"/>
    </location>
</feature>
<feature type="modified residue" description="Phosphotyrosine" evidence="2">
    <location>
        <position position="822"/>
    </location>
</feature>
<feature type="modified residue" description="Phosphotyrosine" evidence="2">
    <location>
        <position position="842"/>
    </location>
</feature>
<feature type="glycosylation site" description="N-linked (GlcNAc...) asparagine" evidence="3">
    <location>
        <position position="67"/>
    </location>
</feature>
<feature type="glycosylation site" description="N-linked (GlcNAc...) asparagine" evidence="3">
    <location>
        <position position="101"/>
    </location>
</feature>
<feature type="glycosylation site" description="N-linked (GlcNAc...) asparagine" evidence="3">
    <location>
        <position position="112"/>
    </location>
</feature>
<feature type="glycosylation site" description="N-linked (GlcNAc...) asparagine" evidence="3">
    <location>
        <position position="135"/>
    </location>
</feature>
<feature type="glycosylation site" description="N-linked (GlcNAc...) asparagine" evidence="3">
    <location>
        <position position="164"/>
    </location>
</feature>
<feature type="glycosylation site" description="N-linked (GlcNAc...) asparagine" evidence="3">
    <location>
        <position position="231"/>
    </location>
</feature>
<feature type="glycosylation site" description="N-linked (GlcNAc...) asparagine" evidence="3">
    <location>
        <position position="363"/>
    </location>
</feature>
<feature type="glycosylation site" description="N-linked (GlcNAc...) asparagine" evidence="3">
    <location>
        <position position="428"/>
    </location>
</feature>
<feature type="glycosylation site" description="N-linked (GlcNAc...) asparagine" evidence="3">
    <location>
        <position position="445"/>
    </location>
</feature>
<feature type="glycosylation site" description="N-linked (GlcNAc...) asparagine" evidence="3">
    <location>
        <position position="448"/>
    </location>
</feature>
<feature type="glycosylation site" description="N-linked (GlcNAc...) asparagine" evidence="3">
    <location>
        <position position="479"/>
    </location>
</feature>
<feature type="glycosylation site" description="N-linked (GlcNAc...) asparagine" evidence="3">
    <location>
        <position position="574"/>
    </location>
</feature>
<feature type="glycosylation site" description="N-linked (GlcNAc...) asparagine" evidence="3">
    <location>
        <position position="634"/>
    </location>
</feature>
<feature type="disulfide bond" evidence="4">
    <location>
        <begin position="161"/>
        <end position="219"/>
    </location>
</feature>
<feature type="disulfide bond" evidence="4">
    <location>
        <begin position="265"/>
        <end position="309"/>
    </location>
</feature>
<feature type="disulfide bond" evidence="4">
    <location>
        <begin position="353"/>
        <end position="396"/>
    </location>
</feature>
<feature type="disulfide bond" evidence="4">
    <location>
        <begin position="442"/>
        <end position="484"/>
    </location>
</feature>
<feature type="disulfide bond" evidence="4">
    <location>
        <begin position="529"/>
        <end position="571"/>
    </location>
</feature>
<feature type="disulfide bond" evidence="4">
    <location>
        <begin position="616"/>
        <end position="659"/>
    </location>
</feature>
<feature type="sequence conflict" description="In Ref. 2; AAF44615." evidence="5" ref="2">
    <original>K</original>
    <variation>E</variation>
    <location>
        <position position="81"/>
    </location>
</feature>
<comment type="function">
    <text evidence="1">Most highly expressed siglec (sialic acid-binding immunoglobulin-like lectin) on B-cells that plays a role in various aspects of B-cell biology including differentiation, antigen presentation, and trafficking to bone marrow. Binds to alpha 2,6-linked sialic acid residues of surface molecules such as CD22 itself, CD45 and IgM in a cis configuration. Can also bind to ligands on other cells as an adhesion molecule in a trans configuration. Acts as an inhibitory coreceptor on the surface of B-cells and inhibits B-cell receptor induced signaling, characterized by inhibition of the calcium mobilization and cellular activation. Mechanistically, the immunoreceptor tyrosine-based inhibitory motif domain is phosphorylated by the Src kinase LYN, which in turn leads to the recruitment of the protein tyrosine phosphatase 1/PTPN6, leading to the negative regulation of BCR signaling. If this negative signaling from is of sufficient strength, apoptosis of the B-cell can be induced.</text>
</comment>
<comment type="subunit">
    <text evidence="1 2">Predominantly monomer of isoform CD22-beta. Also found as heterodimer of isoform CD22-beta and a shorter isoform. Interacts with PTPN6/SHP-1, LYN, SYK, PIK3R1/PIK3R2 and PLCG1 upon phosphorylation. Interacts with GRB2, INPP5D and SHC1 upon phosphorylation (By similarity). May form a complex with INPP5D/SHIP, GRB2 and SHC1 (By similarity).</text>
</comment>
<comment type="subcellular location">
    <subcellularLocation>
        <location evidence="1">Cell membrane</location>
        <topology evidence="1">Single-pass type I membrane protein</topology>
    </subcellularLocation>
</comment>
<comment type="domain">
    <text evidence="1">Contains 4 copies of a cytoplasmic motif that is referred to as the immunoreceptor tyrosine-based inhibitor motif (ITIM). This motif is involved in modulation of cellular responses. The phosphorylated ITIM motif can bind the SH2 domain of several SH2-containing phosphatases.</text>
</comment>
<comment type="PTM">
    <text evidence="2">Phosphorylation of Tyr-762, Tyr-807 and Tyr-822 are involved in binding to SYK, GRB2 and SYK, respectively. Phosphorylation of Tyr-842 is involved in binding to SYK, PLCG2 and PIK3R1/PIK3R2.</text>
</comment>
<comment type="PTM">
    <text evidence="2">Phosphorylated on tyrosine residues by LYN.</text>
</comment>
<comment type="similarity">
    <text evidence="5">Belongs to the immunoglobulin superfamily. SIGLEC (sialic acid binding Ig-like lectin) family.</text>
</comment>
<name>CD22_PANPA</name>
<evidence type="ECO:0000250" key="1">
    <source>
        <dbReference type="UniProtKB" id="P20273"/>
    </source>
</evidence>
<evidence type="ECO:0000250" key="2">
    <source>
        <dbReference type="UniProtKB" id="P35329"/>
    </source>
</evidence>
<evidence type="ECO:0000255" key="3"/>
<evidence type="ECO:0000255" key="4">
    <source>
        <dbReference type="PROSITE-ProRule" id="PRU00114"/>
    </source>
</evidence>
<evidence type="ECO:0000305" key="5"/>
<reference key="1">
    <citation type="journal article" date="2012" name="Nature">
        <title>The bonobo genome compared with the chimpanzee and human genomes.</title>
        <authorList>
            <person name="Prufer K."/>
            <person name="Munch K."/>
            <person name="Hellmann I."/>
            <person name="Akagi K."/>
            <person name="Miller J.R."/>
            <person name="Walenz B."/>
            <person name="Koren S."/>
            <person name="Sutton G."/>
            <person name="Kodira C."/>
            <person name="Winer R."/>
            <person name="Knight J.R."/>
            <person name="Mullikin J.C."/>
            <person name="Meader S.J."/>
            <person name="Ponting C.P."/>
            <person name="Lunter G."/>
            <person name="Higashino S."/>
            <person name="Hobolth A."/>
            <person name="Dutheil J."/>
            <person name="Karakoc E."/>
            <person name="Alkan C."/>
            <person name="Sajjadian S."/>
            <person name="Catacchio C.R."/>
            <person name="Ventura M."/>
            <person name="Marques-Bonet T."/>
            <person name="Eichler E.E."/>
            <person name="Andre C."/>
            <person name="Atencia R."/>
            <person name="Mugisha L."/>
            <person name="Junhold J."/>
            <person name="Patterson N."/>
            <person name="Siebauer M."/>
            <person name="Good J.M."/>
            <person name="Fischer A."/>
            <person name="Ptak S.E."/>
            <person name="Lachmann M."/>
            <person name="Symer D.E."/>
            <person name="Mailund T."/>
            <person name="Schierup M.H."/>
            <person name="Andres A.M."/>
            <person name="Kelso J."/>
            <person name="Paabo S."/>
        </authorList>
    </citation>
    <scope>NUCLEOTIDE SEQUENCE [LARGE SCALE GENOMIC DNA]</scope>
</reference>
<reference key="2">
    <citation type="journal article" date="2000" name="J. Biol. Chem.">
        <title>Loss of N-glycolylneuraminic acid in human evolution: implications for sialic acid recognition by siglecs.</title>
        <authorList>
            <person name="Brinkman-Van der Linden E.C.M."/>
            <person name="Sjoberg E.R."/>
            <person name="Juneja L.R."/>
            <person name="Crocker P.R."/>
            <person name="Varki N."/>
            <person name="Varki A."/>
        </authorList>
    </citation>
    <scope>NUCLEOTIDE SEQUENCE [MRNA] OF 1-332</scope>
</reference>